<feature type="chain" id="PRO_0000358436" description="NAD(P)H-quinone oxidoreductase subunit K">
    <location>
        <begin position="1"/>
        <end position="245"/>
    </location>
</feature>
<feature type="region of interest" description="Disordered" evidence="2">
    <location>
        <begin position="210"/>
        <end position="245"/>
    </location>
</feature>
<feature type="compositionally biased region" description="Basic and acidic residues" evidence="2">
    <location>
        <begin position="236"/>
        <end position="245"/>
    </location>
</feature>
<feature type="binding site" evidence="1">
    <location>
        <position position="58"/>
    </location>
    <ligand>
        <name>[4Fe-4S] cluster</name>
        <dbReference type="ChEBI" id="CHEBI:49883"/>
    </ligand>
</feature>
<feature type="binding site" evidence="1">
    <location>
        <position position="59"/>
    </location>
    <ligand>
        <name>[4Fe-4S] cluster</name>
        <dbReference type="ChEBI" id="CHEBI:49883"/>
    </ligand>
</feature>
<feature type="binding site" evidence="1">
    <location>
        <position position="123"/>
    </location>
    <ligand>
        <name>[4Fe-4S] cluster</name>
        <dbReference type="ChEBI" id="CHEBI:49883"/>
    </ligand>
</feature>
<feature type="binding site" evidence="1">
    <location>
        <position position="154"/>
    </location>
    <ligand>
        <name>[4Fe-4S] cluster</name>
        <dbReference type="ChEBI" id="CHEBI:49883"/>
    </ligand>
</feature>
<sequence length="245" mass="27436">MVLNSNLTTQDKQRIINPIERTNVTQDLSENVILTTVDDLYDWARLSSLWPLLFGTACCFIEFAALIGSRFDFDRFGLIPRSSPRQADLIITAGTITMKMAPQLVRLYEQMPEPKYVIAMGACTITGGMFSVDSPTAVRGVDKLIPVDVYLPGCPPRPEAIIDAIIKLRKKISNESIQERDKIKQTHRYYSTTHNLKPVEEILTGKYLQSDTRSAPPKELAEAIGMPIPPALLTEKAQKEEQTRG</sequence>
<name>NDHK_NOSP7</name>
<reference key="1">
    <citation type="journal article" date="2013" name="Plant Physiol.">
        <title>A Nostoc punctiforme Sugar Transporter Necessary to Establish a Cyanobacterium-Plant Symbiosis.</title>
        <authorList>
            <person name="Ekman M."/>
            <person name="Picossi S."/>
            <person name="Campbell E.L."/>
            <person name="Meeks J.C."/>
            <person name="Flores E."/>
        </authorList>
    </citation>
    <scope>NUCLEOTIDE SEQUENCE [LARGE SCALE GENOMIC DNA]</scope>
    <source>
        <strain>ATCC 29133 / PCC 73102</strain>
    </source>
</reference>
<comment type="function">
    <text evidence="1">NDH-1 shuttles electrons from an unknown electron donor, via FMN and iron-sulfur (Fe-S) centers, to quinones in the respiratory and/or the photosynthetic chain. The immediate electron acceptor for the enzyme in this species is believed to be plastoquinone. Couples the redox reaction to proton translocation, and thus conserves the redox energy in a proton gradient. Cyanobacterial NDH-1 also plays a role in inorganic carbon-concentration.</text>
</comment>
<comment type="catalytic activity">
    <reaction evidence="1">
        <text>a plastoquinone + NADH + (n+1) H(+)(in) = a plastoquinol + NAD(+) + n H(+)(out)</text>
        <dbReference type="Rhea" id="RHEA:42608"/>
        <dbReference type="Rhea" id="RHEA-COMP:9561"/>
        <dbReference type="Rhea" id="RHEA-COMP:9562"/>
        <dbReference type="ChEBI" id="CHEBI:15378"/>
        <dbReference type="ChEBI" id="CHEBI:17757"/>
        <dbReference type="ChEBI" id="CHEBI:57540"/>
        <dbReference type="ChEBI" id="CHEBI:57945"/>
        <dbReference type="ChEBI" id="CHEBI:62192"/>
    </reaction>
</comment>
<comment type="catalytic activity">
    <reaction evidence="1">
        <text>a plastoquinone + NADPH + (n+1) H(+)(in) = a plastoquinol + NADP(+) + n H(+)(out)</text>
        <dbReference type="Rhea" id="RHEA:42612"/>
        <dbReference type="Rhea" id="RHEA-COMP:9561"/>
        <dbReference type="Rhea" id="RHEA-COMP:9562"/>
        <dbReference type="ChEBI" id="CHEBI:15378"/>
        <dbReference type="ChEBI" id="CHEBI:17757"/>
        <dbReference type="ChEBI" id="CHEBI:57783"/>
        <dbReference type="ChEBI" id="CHEBI:58349"/>
        <dbReference type="ChEBI" id="CHEBI:62192"/>
    </reaction>
</comment>
<comment type="cofactor">
    <cofactor evidence="1">
        <name>[4Fe-4S] cluster</name>
        <dbReference type="ChEBI" id="CHEBI:49883"/>
    </cofactor>
    <text evidence="1">Binds 1 [4Fe-4S] cluster.</text>
</comment>
<comment type="subunit">
    <text evidence="1">NDH-1 can be composed of about 15 different subunits; different subcomplexes with different compositions have been identified which probably have different functions.</text>
</comment>
<comment type="subcellular location">
    <subcellularLocation>
        <location evidence="1">Cellular thylakoid membrane</location>
        <topology evidence="1">Peripheral membrane protein</topology>
        <orientation evidence="1">Cytoplasmic side</orientation>
    </subcellularLocation>
</comment>
<comment type="similarity">
    <text evidence="1">Belongs to the complex I 20 kDa subunit family.</text>
</comment>
<keyword id="KW-0004">4Fe-4S</keyword>
<keyword id="KW-0408">Iron</keyword>
<keyword id="KW-0411">Iron-sulfur</keyword>
<keyword id="KW-0472">Membrane</keyword>
<keyword id="KW-0479">Metal-binding</keyword>
<keyword id="KW-0520">NAD</keyword>
<keyword id="KW-0521">NADP</keyword>
<keyword id="KW-0618">Plastoquinone</keyword>
<keyword id="KW-0874">Quinone</keyword>
<keyword id="KW-1185">Reference proteome</keyword>
<keyword id="KW-0793">Thylakoid</keyword>
<keyword id="KW-1278">Translocase</keyword>
<keyword id="KW-0813">Transport</keyword>
<protein>
    <recommendedName>
        <fullName evidence="1">NAD(P)H-quinone oxidoreductase subunit K</fullName>
        <ecNumber evidence="1">7.1.1.-</ecNumber>
    </recommendedName>
    <alternativeName>
        <fullName evidence="1">NAD(P)H dehydrogenase I subunit K</fullName>
    </alternativeName>
    <alternativeName>
        <fullName evidence="1">NDH-1 subunit K</fullName>
        <shortName evidence="1">NDH-K</shortName>
    </alternativeName>
</protein>
<gene>
    <name evidence="1" type="primary">ndhK</name>
    <name type="ordered locus">Npun_R5547</name>
</gene>
<accession>B2J6S6</accession>
<dbReference type="EC" id="7.1.1.-" evidence="1"/>
<dbReference type="EMBL" id="CP001037">
    <property type="protein sequence ID" value="ACC83852.1"/>
    <property type="molecule type" value="Genomic_DNA"/>
</dbReference>
<dbReference type="RefSeq" id="WP_012411796.1">
    <property type="nucleotide sequence ID" value="NC_010628.1"/>
</dbReference>
<dbReference type="SMR" id="B2J6S6"/>
<dbReference type="STRING" id="63737.Npun_R5547"/>
<dbReference type="EnsemblBacteria" id="ACC83852">
    <property type="protein sequence ID" value="ACC83852"/>
    <property type="gene ID" value="Npun_R5547"/>
</dbReference>
<dbReference type="KEGG" id="npu:Npun_R5547"/>
<dbReference type="eggNOG" id="COG0377">
    <property type="taxonomic scope" value="Bacteria"/>
</dbReference>
<dbReference type="HOGENOM" id="CLU_055737_2_1_3"/>
<dbReference type="OrthoDB" id="9786737at2"/>
<dbReference type="PhylomeDB" id="B2J6S6"/>
<dbReference type="Proteomes" id="UP000001191">
    <property type="component" value="Chromosome"/>
</dbReference>
<dbReference type="GO" id="GO:0031676">
    <property type="term" value="C:plasma membrane-derived thylakoid membrane"/>
    <property type="evidence" value="ECO:0007669"/>
    <property type="project" value="UniProtKB-SubCell"/>
</dbReference>
<dbReference type="GO" id="GO:0045271">
    <property type="term" value="C:respiratory chain complex I"/>
    <property type="evidence" value="ECO:0007669"/>
    <property type="project" value="TreeGrafter"/>
</dbReference>
<dbReference type="GO" id="GO:0051539">
    <property type="term" value="F:4 iron, 4 sulfur cluster binding"/>
    <property type="evidence" value="ECO:0007669"/>
    <property type="project" value="UniProtKB-KW"/>
</dbReference>
<dbReference type="GO" id="GO:0005506">
    <property type="term" value="F:iron ion binding"/>
    <property type="evidence" value="ECO:0007669"/>
    <property type="project" value="UniProtKB-UniRule"/>
</dbReference>
<dbReference type="GO" id="GO:0008137">
    <property type="term" value="F:NADH dehydrogenase (ubiquinone) activity"/>
    <property type="evidence" value="ECO:0007669"/>
    <property type="project" value="InterPro"/>
</dbReference>
<dbReference type="GO" id="GO:0048038">
    <property type="term" value="F:quinone binding"/>
    <property type="evidence" value="ECO:0007669"/>
    <property type="project" value="UniProtKB-KW"/>
</dbReference>
<dbReference type="GO" id="GO:0009060">
    <property type="term" value="P:aerobic respiration"/>
    <property type="evidence" value="ECO:0007669"/>
    <property type="project" value="TreeGrafter"/>
</dbReference>
<dbReference type="GO" id="GO:0015990">
    <property type="term" value="P:electron transport coupled proton transport"/>
    <property type="evidence" value="ECO:0007669"/>
    <property type="project" value="TreeGrafter"/>
</dbReference>
<dbReference type="GO" id="GO:0019684">
    <property type="term" value="P:photosynthesis, light reaction"/>
    <property type="evidence" value="ECO:0007669"/>
    <property type="project" value="UniProtKB-UniRule"/>
</dbReference>
<dbReference type="FunFam" id="3.40.50.12280:FF:000003">
    <property type="entry name" value="NAD(P)H-quinone oxidoreductase subunit K, chloroplastic"/>
    <property type="match status" value="1"/>
</dbReference>
<dbReference type="Gene3D" id="3.40.50.12280">
    <property type="match status" value="1"/>
</dbReference>
<dbReference type="HAMAP" id="MF_01356">
    <property type="entry name" value="NDH1_NuoB"/>
    <property type="match status" value="1"/>
</dbReference>
<dbReference type="InterPro" id="IPR006137">
    <property type="entry name" value="NADH_UbQ_OxRdtase-like_20kDa"/>
</dbReference>
<dbReference type="InterPro" id="IPR006138">
    <property type="entry name" value="NADH_UQ_OxRdtase_20Kd_su"/>
</dbReference>
<dbReference type="NCBIfam" id="TIGR01957">
    <property type="entry name" value="nuoB_fam"/>
    <property type="match status" value="1"/>
</dbReference>
<dbReference type="NCBIfam" id="NF005012">
    <property type="entry name" value="PRK06411.1"/>
    <property type="match status" value="1"/>
</dbReference>
<dbReference type="PANTHER" id="PTHR11995">
    <property type="entry name" value="NADH DEHYDROGENASE"/>
    <property type="match status" value="1"/>
</dbReference>
<dbReference type="PANTHER" id="PTHR11995:SF14">
    <property type="entry name" value="NADH DEHYDROGENASE [UBIQUINONE] IRON-SULFUR PROTEIN 7, MITOCHONDRIAL"/>
    <property type="match status" value="1"/>
</dbReference>
<dbReference type="Pfam" id="PF01058">
    <property type="entry name" value="Oxidored_q6"/>
    <property type="match status" value="1"/>
</dbReference>
<dbReference type="SUPFAM" id="SSF56770">
    <property type="entry name" value="HydA/Nqo6-like"/>
    <property type="match status" value="1"/>
</dbReference>
<dbReference type="PROSITE" id="PS01150">
    <property type="entry name" value="COMPLEX1_20K"/>
    <property type="match status" value="1"/>
</dbReference>
<proteinExistence type="inferred from homology"/>
<organism>
    <name type="scientific">Nostoc punctiforme (strain ATCC 29133 / PCC 73102)</name>
    <dbReference type="NCBI Taxonomy" id="63737"/>
    <lineage>
        <taxon>Bacteria</taxon>
        <taxon>Bacillati</taxon>
        <taxon>Cyanobacteriota</taxon>
        <taxon>Cyanophyceae</taxon>
        <taxon>Nostocales</taxon>
        <taxon>Nostocaceae</taxon>
        <taxon>Nostoc</taxon>
    </lineage>
</organism>
<evidence type="ECO:0000255" key="1">
    <source>
        <dbReference type="HAMAP-Rule" id="MF_01356"/>
    </source>
</evidence>
<evidence type="ECO:0000256" key="2">
    <source>
        <dbReference type="SAM" id="MobiDB-lite"/>
    </source>
</evidence>